<sequence>MTTKQPTRFEAVIGIETHVQLNSRTKAFCRCAYEYGAEPNTRVCPTCMGHPGTLPVLNSAVVKKGIAIGTALGAKIRRTSKFDRKQYFYPDLPKGYQISQFDEPLCYDGSIDVVLPVEDGGEVKRVGITRAHLEEDAGKLTHAKGEDGKKYSYADFNRAGVALLEIVTEPDLRTGREVAAYGSELRRIVRFLDACDGDMSRGSMRNDVNVSIRPVGRERFGTKVEVKNMNSFNAMARAIDYEIARQEELIRSGRGDEIVQETRTWDEAAQKTVAMRKKEGLADYRYFPEPDIPKLRLSEEFISNVVASMPELPSMVRARYAALGLPPADVQVLVEDKELVTYFDAALSSSAKPSAKQVANWLTGDIMAHLKNSKMENVSQLPLSPEALGEFCAMIDAGEISGKIGKDLLPELLEKGGSAKKLVADRGLSQVSDPREIEALVDGVLEANAGQLEQYRAGKTKLKGFFVGACLKASGGRANPSLVDRILQAKLDGVPIDVA</sequence>
<evidence type="ECO:0000255" key="1">
    <source>
        <dbReference type="HAMAP-Rule" id="MF_03147"/>
    </source>
</evidence>
<reference key="1">
    <citation type="journal article" date="2007" name="Proc. Natl. Acad. Sci. U.S.A.">
        <title>The tiny eukaryote Ostreococcus provides genomic insights into the paradox of plankton speciation.</title>
        <authorList>
            <person name="Palenik B."/>
            <person name="Grimwood J."/>
            <person name="Aerts A."/>
            <person name="Rouze P."/>
            <person name="Salamov A."/>
            <person name="Putnam N."/>
            <person name="Dupont C."/>
            <person name="Jorgensen R."/>
            <person name="Derelle E."/>
            <person name="Rombauts S."/>
            <person name="Zhou K."/>
            <person name="Otillar R."/>
            <person name="Merchant S.S."/>
            <person name="Podell S."/>
            <person name="Gaasterland T."/>
            <person name="Napoli C."/>
            <person name="Gendler K."/>
            <person name="Manuell A."/>
            <person name="Tai V."/>
            <person name="Vallon O."/>
            <person name="Piganeau G."/>
            <person name="Jancek S."/>
            <person name="Heijde M."/>
            <person name="Jabbari K."/>
            <person name="Bowler C."/>
            <person name="Lohr M."/>
            <person name="Robbens S."/>
            <person name="Werner G."/>
            <person name="Dubchak I."/>
            <person name="Pazour G.J."/>
            <person name="Ren Q."/>
            <person name="Paulsen I."/>
            <person name="Delwiche C."/>
            <person name="Schmutz J."/>
            <person name="Rokhsar D."/>
            <person name="Van de Peer Y."/>
            <person name="Moreau H."/>
            <person name="Grigoriev I.V."/>
        </authorList>
    </citation>
    <scope>NUCLEOTIDE SEQUENCE [LARGE SCALE GENOMIC DNA]</scope>
    <source>
        <strain>CCE9901</strain>
    </source>
</reference>
<accession>A4S450</accession>
<feature type="chain" id="PRO_0000413231" description="Glutamyl-tRNA(Gln) amidotransferase subunit B, chloroplastic/mitochondrial">
    <location>
        <begin position="1"/>
        <end position="499"/>
    </location>
</feature>
<organism>
    <name type="scientific">Ostreococcus lucimarinus (strain CCE9901)</name>
    <dbReference type="NCBI Taxonomy" id="436017"/>
    <lineage>
        <taxon>Eukaryota</taxon>
        <taxon>Viridiplantae</taxon>
        <taxon>Chlorophyta</taxon>
        <taxon>Mamiellophyceae</taxon>
        <taxon>Mamiellales</taxon>
        <taxon>Bathycoccaceae</taxon>
        <taxon>Ostreococcus</taxon>
    </lineage>
</organism>
<comment type="function">
    <text evidence="1">Allows the formation of correctly charged Gln-tRNA(Gln) through the transamidation of misacylated Glu-tRNA(Gln) in chloroplasts and mitochondria. The reaction takes place in the presence of glutamine and ATP through an activated gamma-phospho-Glu-tRNA(Gln).</text>
</comment>
<comment type="catalytic activity">
    <reaction evidence="1">
        <text>L-glutamyl-tRNA(Gln) + L-glutamine + ATP + H2O = L-glutaminyl-tRNA(Gln) + L-glutamate + ADP + phosphate + H(+)</text>
        <dbReference type="Rhea" id="RHEA:17521"/>
        <dbReference type="Rhea" id="RHEA-COMP:9681"/>
        <dbReference type="Rhea" id="RHEA-COMP:9684"/>
        <dbReference type="ChEBI" id="CHEBI:15377"/>
        <dbReference type="ChEBI" id="CHEBI:15378"/>
        <dbReference type="ChEBI" id="CHEBI:29985"/>
        <dbReference type="ChEBI" id="CHEBI:30616"/>
        <dbReference type="ChEBI" id="CHEBI:43474"/>
        <dbReference type="ChEBI" id="CHEBI:58359"/>
        <dbReference type="ChEBI" id="CHEBI:78520"/>
        <dbReference type="ChEBI" id="CHEBI:78521"/>
        <dbReference type="ChEBI" id="CHEBI:456216"/>
    </reaction>
</comment>
<comment type="subunit">
    <text evidence="1">Subunit of the heterotrimeric GatCAB amidotransferase (AdT) complex, composed of A, B and C subunits.</text>
</comment>
<comment type="subcellular location">
    <subcellularLocation>
        <location evidence="1">Mitochondrion</location>
    </subcellularLocation>
    <subcellularLocation>
        <location evidence="1">Plastid</location>
        <location evidence="1">Chloroplast</location>
    </subcellularLocation>
</comment>
<comment type="miscellaneous">
    <text evidence="1">This protein may be expected to contain an N-terminal transit peptide but none has been predicted.</text>
</comment>
<comment type="similarity">
    <text evidence="1">Belongs to the GatB/GatE family. GatB subfamily.</text>
</comment>
<dbReference type="EC" id="6.3.5.-" evidence="1"/>
<dbReference type="EMBL" id="CP000590">
    <property type="protein sequence ID" value="ABO98500.1"/>
    <property type="molecule type" value="Genomic_DNA"/>
</dbReference>
<dbReference type="RefSeq" id="XP_001420207.1">
    <property type="nucleotide sequence ID" value="XM_001420170.1"/>
</dbReference>
<dbReference type="SMR" id="A4S450"/>
<dbReference type="STRING" id="436017.A4S450"/>
<dbReference type="EnsemblPlants" id="ABO98500">
    <property type="protein sequence ID" value="ABO98500"/>
    <property type="gene ID" value="OSTLU_17170"/>
</dbReference>
<dbReference type="GeneID" id="5003932"/>
<dbReference type="Gramene" id="ABO98500">
    <property type="protein sequence ID" value="ABO98500"/>
    <property type="gene ID" value="OSTLU_17170"/>
</dbReference>
<dbReference type="KEGG" id="olu:OSTLU_17170"/>
<dbReference type="eggNOG" id="KOG2438">
    <property type="taxonomic scope" value="Eukaryota"/>
</dbReference>
<dbReference type="HOGENOM" id="CLU_019240_0_0_1"/>
<dbReference type="OMA" id="ARKWWMG"/>
<dbReference type="OrthoDB" id="1722066at2759"/>
<dbReference type="Proteomes" id="UP000001568">
    <property type="component" value="Chromosome 10"/>
</dbReference>
<dbReference type="GO" id="GO:0009507">
    <property type="term" value="C:chloroplast"/>
    <property type="evidence" value="ECO:0007669"/>
    <property type="project" value="UniProtKB-SubCell"/>
</dbReference>
<dbReference type="GO" id="GO:0030956">
    <property type="term" value="C:glutamyl-tRNA(Gln) amidotransferase complex"/>
    <property type="evidence" value="ECO:0007669"/>
    <property type="project" value="UniProtKB-UniRule"/>
</dbReference>
<dbReference type="GO" id="GO:0005739">
    <property type="term" value="C:mitochondrion"/>
    <property type="evidence" value="ECO:0007669"/>
    <property type="project" value="UniProtKB-SubCell"/>
</dbReference>
<dbReference type="GO" id="GO:0005524">
    <property type="term" value="F:ATP binding"/>
    <property type="evidence" value="ECO:0007669"/>
    <property type="project" value="UniProtKB-KW"/>
</dbReference>
<dbReference type="GO" id="GO:0050567">
    <property type="term" value="F:glutaminyl-tRNA synthase (glutamine-hydrolyzing) activity"/>
    <property type="evidence" value="ECO:0007669"/>
    <property type="project" value="UniProtKB-UniRule"/>
</dbReference>
<dbReference type="GO" id="GO:0070681">
    <property type="term" value="P:glutaminyl-tRNAGln biosynthesis via transamidation"/>
    <property type="evidence" value="ECO:0007669"/>
    <property type="project" value="UniProtKB-UniRule"/>
</dbReference>
<dbReference type="GO" id="GO:0032543">
    <property type="term" value="P:mitochondrial translation"/>
    <property type="evidence" value="ECO:0007669"/>
    <property type="project" value="UniProtKB-UniRule"/>
</dbReference>
<dbReference type="FunFam" id="1.10.10.410:FF:000001">
    <property type="entry name" value="Aspartyl/glutamyl-tRNA(Asn/Gln) amidotransferase subunit B"/>
    <property type="match status" value="1"/>
</dbReference>
<dbReference type="Gene3D" id="1.10.10.410">
    <property type="match status" value="1"/>
</dbReference>
<dbReference type="HAMAP" id="MF_00121">
    <property type="entry name" value="GatB"/>
    <property type="match status" value="1"/>
</dbReference>
<dbReference type="InterPro" id="IPR017959">
    <property type="entry name" value="Asn/Gln-tRNA_amidoTrfase_suB/E"/>
</dbReference>
<dbReference type="InterPro" id="IPR006075">
    <property type="entry name" value="Asn/Gln-tRNA_Trfase_suB/E_cat"/>
</dbReference>
<dbReference type="InterPro" id="IPR018027">
    <property type="entry name" value="Asn/Gln_amidotransferase"/>
</dbReference>
<dbReference type="InterPro" id="IPR003789">
    <property type="entry name" value="Asn/Gln_tRNA_amidoTrase-B-like"/>
</dbReference>
<dbReference type="InterPro" id="IPR004413">
    <property type="entry name" value="GatB"/>
</dbReference>
<dbReference type="InterPro" id="IPR023168">
    <property type="entry name" value="GatB_Yqey_C_2"/>
</dbReference>
<dbReference type="InterPro" id="IPR017958">
    <property type="entry name" value="Gln-tRNA_amidoTrfase_suB_CS"/>
</dbReference>
<dbReference type="InterPro" id="IPR014746">
    <property type="entry name" value="Gln_synth/guanido_kin_cat_dom"/>
</dbReference>
<dbReference type="NCBIfam" id="TIGR00133">
    <property type="entry name" value="gatB"/>
    <property type="match status" value="1"/>
</dbReference>
<dbReference type="NCBIfam" id="NF004012">
    <property type="entry name" value="PRK05477.1-2"/>
    <property type="match status" value="1"/>
</dbReference>
<dbReference type="NCBIfam" id="NF004014">
    <property type="entry name" value="PRK05477.1-4"/>
    <property type="match status" value="1"/>
</dbReference>
<dbReference type="PANTHER" id="PTHR11659">
    <property type="entry name" value="GLUTAMYL-TRNA GLN AMIDOTRANSFERASE SUBUNIT B MITOCHONDRIAL AND PROKARYOTIC PET112-RELATED"/>
    <property type="match status" value="1"/>
</dbReference>
<dbReference type="PANTHER" id="PTHR11659:SF0">
    <property type="entry name" value="GLUTAMYL-TRNA(GLN) AMIDOTRANSFERASE SUBUNIT B, MITOCHONDRIAL"/>
    <property type="match status" value="1"/>
</dbReference>
<dbReference type="Pfam" id="PF02934">
    <property type="entry name" value="GatB_N"/>
    <property type="match status" value="1"/>
</dbReference>
<dbReference type="Pfam" id="PF02637">
    <property type="entry name" value="GatB_Yqey"/>
    <property type="match status" value="1"/>
</dbReference>
<dbReference type="SMART" id="SM00845">
    <property type="entry name" value="GatB_Yqey"/>
    <property type="match status" value="1"/>
</dbReference>
<dbReference type="SUPFAM" id="SSF89095">
    <property type="entry name" value="GatB/YqeY motif"/>
    <property type="match status" value="2"/>
</dbReference>
<dbReference type="SUPFAM" id="SSF55931">
    <property type="entry name" value="Glutamine synthetase/guanido kinase"/>
    <property type="match status" value="1"/>
</dbReference>
<dbReference type="PROSITE" id="PS01234">
    <property type="entry name" value="GATB"/>
    <property type="match status" value="1"/>
</dbReference>
<keyword id="KW-0067">ATP-binding</keyword>
<keyword id="KW-0150">Chloroplast</keyword>
<keyword id="KW-0436">Ligase</keyword>
<keyword id="KW-0496">Mitochondrion</keyword>
<keyword id="KW-0547">Nucleotide-binding</keyword>
<keyword id="KW-0934">Plastid</keyword>
<keyword id="KW-0648">Protein biosynthesis</keyword>
<keyword id="KW-1185">Reference proteome</keyword>
<protein>
    <recommendedName>
        <fullName evidence="1">Glutamyl-tRNA(Gln) amidotransferase subunit B, chloroplastic/mitochondrial</fullName>
        <shortName evidence="1">Glu-AdT subunit B</shortName>
        <ecNumber evidence="1">6.3.5.-</ecNumber>
    </recommendedName>
</protein>
<gene>
    <name evidence="1" type="primary">GATB</name>
    <name type="ORF">OSTLU_17170</name>
</gene>
<proteinExistence type="inferred from homology"/>
<name>GATB_OSTLU</name>